<organism>
    <name type="scientific">Escherichia coli O157:H7</name>
    <dbReference type="NCBI Taxonomy" id="83334"/>
    <lineage>
        <taxon>Bacteria</taxon>
        <taxon>Pseudomonadati</taxon>
        <taxon>Pseudomonadota</taxon>
        <taxon>Gammaproteobacteria</taxon>
        <taxon>Enterobacterales</taxon>
        <taxon>Enterobacteriaceae</taxon>
        <taxon>Escherichia</taxon>
    </lineage>
</organism>
<evidence type="ECO:0000305" key="1"/>
<proteinExistence type="inferred from homology"/>
<gene>
    <name type="primary">yegP</name>
    <name type="ordered locus">Z3249</name>
    <name type="ordered locus">ECs2888</name>
</gene>
<comment type="similarity">
    <text evidence="1">Belongs to the UPF0339 family. Duplicated subfamily.</text>
</comment>
<comment type="sequence caution" evidence="1">
    <conflict type="erroneous initiation">
        <sequence resource="EMBL-CDS" id="AAG57143"/>
    </conflict>
</comment>
<comment type="sequence caution" evidence="1">
    <conflict type="erroneous initiation">
        <sequence resource="EMBL-CDS" id="BAB36311"/>
    </conflict>
</comment>
<reference key="1">
    <citation type="journal article" date="2001" name="Nature">
        <title>Genome sequence of enterohaemorrhagic Escherichia coli O157:H7.</title>
        <authorList>
            <person name="Perna N.T."/>
            <person name="Plunkett G. III"/>
            <person name="Burland V."/>
            <person name="Mau B."/>
            <person name="Glasner J.D."/>
            <person name="Rose D.J."/>
            <person name="Mayhew G.F."/>
            <person name="Evans P.S."/>
            <person name="Gregor J."/>
            <person name="Kirkpatrick H.A."/>
            <person name="Posfai G."/>
            <person name="Hackett J."/>
            <person name="Klink S."/>
            <person name="Boutin A."/>
            <person name="Shao Y."/>
            <person name="Miller L."/>
            <person name="Grotbeck E.J."/>
            <person name="Davis N.W."/>
            <person name="Lim A."/>
            <person name="Dimalanta E.T."/>
            <person name="Potamousis K."/>
            <person name="Apodaca J."/>
            <person name="Anantharaman T.S."/>
            <person name="Lin J."/>
            <person name="Yen G."/>
            <person name="Schwartz D.C."/>
            <person name="Welch R.A."/>
            <person name="Blattner F.R."/>
        </authorList>
    </citation>
    <scope>NUCLEOTIDE SEQUENCE [LARGE SCALE GENOMIC DNA]</scope>
    <source>
        <strain>O157:H7 / EDL933 / ATCC 700927 / EHEC</strain>
    </source>
</reference>
<reference key="2">
    <citation type="journal article" date="2001" name="DNA Res.">
        <title>Complete genome sequence of enterohemorrhagic Escherichia coli O157:H7 and genomic comparison with a laboratory strain K-12.</title>
        <authorList>
            <person name="Hayashi T."/>
            <person name="Makino K."/>
            <person name="Ohnishi M."/>
            <person name="Kurokawa K."/>
            <person name="Ishii K."/>
            <person name="Yokoyama K."/>
            <person name="Han C.-G."/>
            <person name="Ohtsubo E."/>
            <person name="Nakayama K."/>
            <person name="Murata T."/>
            <person name="Tanaka M."/>
            <person name="Tobe T."/>
            <person name="Iida T."/>
            <person name="Takami H."/>
            <person name="Honda T."/>
            <person name="Sasakawa C."/>
            <person name="Ogasawara N."/>
            <person name="Yasunaga T."/>
            <person name="Kuhara S."/>
            <person name="Shiba T."/>
            <person name="Hattori M."/>
            <person name="Shinagawa H."/>
        </authorList>
    </citation>
    <scope>NUCLEOTIDE SEQUENCE [LARGE SCALE GENOMIC DNA]</scope>
    <source>
        <strain>O157:H7 / Sakai / RIMD 0509952 / EHEC</strain>
    </source>
</reference>
<sequence length="110" mass="11967">MAGWFELSKSSDSQFRFVLKAGNGETILTSELYTSKASAEKGIASVRSNSPQEERYEKKTASNGKFYFNLKAANHQIIGSSQMYATAQSRETGIASVKANGTSQTVKDNT</sequence>
<protein>
    <recommendedName>
        <fullName>UPF0339 protein YegP</fullName>
    </recommendedName>
</protein>
<name>YEGP_ECO57</name>
<keyword id="KW-1185">Reference proteome</keyword>
<keyword id="KW-0677">Repeat</keyword>
<accession>Q8X7I0</accession>
<accession>Q7ACL7</accession>
<feature type="chain" id="PRO_0000218136" description="UPF0339 protein YegP">
    <location>
        <begin position="1"/>
        <end position="110"/>
    </location>
</feature>
<feature type="repeat" description="1">
    <location>
        <begin position="10"/>
        <end position="58"/>
    </location>
</feature>
<feature type="repeat" description="2">
    <location>
        <begin position="61"/>
        <end position="109"/>
    </location>
</feature>
<dbReference type="EMBL" id="AE005174">
    <property type="protein sequence ID" value="AAG57143.1"/>
    <property type="status" value="ALT_INIT"/>
    <property type="molecule type" value="Genomic_DNA"/>
</dbReference>
<dbReference type="EMBL" id="BA000007">
    <property type="protein sequence ID" value="BAB36311.1"/>
    <property type="status" value="ALT_INIT"/>
    <property type="molecule type" value="Genomic_DNA"/>
</dbReference>
<dbReference type="PIR" id="C85835">
    <property type="entry name" value="C85835"/>
</dbReference>
<dbReference type="PIR" id="H90989">
    <property type="entry name" value="H90989"/>
</dbReference>
<dbReference type="RefSeq" id="NP_310915.2">
    <property type="nucleotide sequence ID" value="NC_002695.1"/>
</dbReference>
<dbReference type="RefSeq" id="WP_001301848.1">
    <property type="nucleotide sequence ID" value="NZ_VOAI01000013.1"/>
</dbReference>
<dbReference type="BMRB" id="Q8X7I0"/>
<dbReference type="SMR" id="Q8X7I0"/>
<dbReference type="STRING" id="155864.Z3249"/>
<dbReference type="GeneID" id="916590"/>
<dbReference type="KEGG" id="ece:Z3249"/>
<dbReference type="KEGG" id="ecs:ECs_2888"/>
<dbReference type="PATRIC" id="fig|386585.9.peg.3021"/>
<dbReference type="eggNOG" id="COG3422">
    <property type="taxonomic scope" value="Bacteria"/>
</dbReference>
<dbReference type="HOGENOM" id="CLU_163886_0_0_6"/>
<dbReference type="OMA" id="AANHQVI"/>
<dbReference type="Proteomes" id="UP000000558">
    <property type="component" value="Chromosome"/>
</dbReference>
<dbReference type="Proteomes" id="UP000002519">
    <property type="component" value="Chromosome"/>
</dbReference>
<dbReference type="FunFam" id="2.30.29.80:FF:000001">
    <property type="entry name" value="DUF1508 domain-containing protein"/>
    <property type="match status" value="1"/>
</dbReference>
<dbReference type="Gene3D" id="2.30.29.80">
    <property type="match status" value="1"/>
</dbReference>
<dbReference type="InterPro" id="IPR010879">
    <property type="entry name" value="DUF1508"/>
</dbReference>
<dbReference type="InterPro" id="IPR051141">
    <property type="entry name" value="UPF0339_domain"/>
</dbReference>
<dbReference type="InterPro" id="IPR036913">
    <property type="entry name" value="YegP-like_sf"/>
</dbReference>
<dbReference type="PANTHER" id="PTHR40606">
    <property type="match status" value="1"/>
</dbReference>
<dbReference type="PANTHER" id="PTHR40606:SF1">
    <property type="entry name" value="UPF0339 PROTEIN YEGP"/>
    <property type="match status" value="1"/>
</dbReference>
<dbReference type="Pfam" id="PF07411">
    <property type="entry name" value="DUF1508"/>
    <property type="match status" value="2"/>
</dbReference>
<dbReference type="SUPFAM" id="SSF160113">
    <property type="entry name" value="YegP-like"/>
    <property type="match status" value="2"/>
</dbReference>